<proteinExistence type="inferred from homology"/>
<organism>
    <name type="scientific">Mycosarcoma maydis</name>
    <name type="common">Corn smut fungus</name>
    <name type="synonym">Ustilago maydis</name>
    <dbReference type="NCBI Taxonomy" id="5270"/>
    <lineage>
        <taxon>Eukaryota</taxon>
        <taxon>Fungi</taxon>
        <taxon>Dikarya</taxon>
        <taxon>Basidiomycota</taxon>
        <taxon>Ustilaginomycotina</taxon>
        <taxon>Ustilaginomycetes</taxon>
        <taxon>Ustilaginales</taxon>
        <taxon>Ustilaginaceae</taxon>
        <taxon>Mycosarcoma</taxon>
    </lineage>
</organism>
<keyword id="KW-0507">mRNA processing</keyword>
<keyword id="KW-0508">mRNA splicing</keyword>
<keyword id="KW-0539">Nucleus</keyword>
<keyword id="KW-1185">Reference proteome</keyword>
<keyword id="KW-0677">Repeat</keyword>
<keyword id="KW-0747">Spliceosome</keyword>
<evidence type="ECO:0000250" key="1"/>
<evidence type="ECO:0000256" key="2">
    <source>
        <dbReference type="SAM" id="MobiDB-lite"/>
    </source>
</evidence>
<evidence type="ECO:0000305" key="3"/>
<protein>
    <recommendedName>
        <fullName>Pre-mRNA-splicing factor SYF1</fullName>
    </recommendedName>
</protein>
<dbReference type="EMBL" id="CM003149">
    <property type="protein sequence ID" value="KIS68261.1"/>
    <property type="molecule type" value="Genomic_DNA"/>
</dbReference>
<dbReference type="RefSeq" id="XP_011390275.1">
    <property type="nucleotide sequence ID" value="XM_011391973.1"/>
</dbReference>
<dbReference type="SMR" id="Q4P7S1"/>
<dbReference type="FunCoup" id="Q4P7S1">
    <property type="interactions" value="694"/>
</dbReference>
<dbReference type="STRING" id="237631.Q4P7S1"/>
<dbReference type="EnsemblFungi" id="KIS68261">
    <property type="protein sequence ID" value="KIS68261"/>
    <property type="gene ID" value="UMAG_03842"/>
</dbReference>
<dbReference type="GeneID" id="23564190"/>
<dbReference type="KEGG" id="uma:UMAG_03842"/>
<dbReference type="VEuPathDB" id="FungiDB:UMAG_03842"/>
<dbReference type="eggNOG" id="KOG2047">
    <property type="taxonomic scope" value="Eukaryota"/>
</dbReference>
<dbReference type="HOGENOM" id="CLU_007736_1_0_1"/>
<dbReference type="InParanoid" id="Q4P7S1"/>
<dbReference type="OMA" id="AWHARAK"/>
<dbReference type="OrthoDB" id="10067343at2759"/>
<dbReference type="Proteomes" id="UP000000561">
    <property type="component" value="Chromosome 10"/>
</dbReference>
<dbReference type="GO" id="GO:0071014">
    <property type="term" value="C:post-mRNA release spliceosomal complex"/>
    <property type="evidence" value="ECO:0000318"/>
    <property type="project" value="GO_Central"/>
</dbReference>
<dbReference type="GO" id="GO:0000974">
    <property type="term" value="C:Prp19 complex"/>
    <property type="evidence" value="ECO:0000318"/>
    <property type="project" value="GO_Central"/>
</dbReference>
<dbReference type="GO" id="GO:0071007">
    <property type="term" value="C:U2-type catalytic step 2 spliceosome"/>
    <property type="evidence" value="ECO:0000318"/>
    <property type="project" value="GO_Central"/>
</dbReference>
<dbReference type="GO" id="GO:0000349">
    <property type="term" value="P:generation of catalytic spliceosome for first transesterification step"/>
    <property type="evidence" value="ECO:0000318"/>
    <property type="project" value="GO_Central"/>
</dbReference>
<dbReference type="GO" id="GO:0000398">
    <property type="term" value="P:mRNA splicing, via spliceosome"/>
    <property type="evidence" value="ECO:0000318"/>
    <property type="project" value="GO_Central"/>
</dbReference>
<dbReference type="FunFam" id="1.25.40.10:FF:000023">
    <property type="entry name" value="Pre-mRNA-splicing factor SYF1"/>
    <property type="match status" value="1"/>
</dbReference>
<dbReference type="FunFam" id="1.25.40.10:FF:000038">
    <property type="entry name" value="Putative pre-mRNA-splicing factor SYF1"/>
    <property type="match status" value="1"/>
</dbReference>
<dbReference type="Gene3D" id="1.25.40.10">
    <property type="entry name" value="Tetratricopeptide repeat domain"/>
    <property type="match status" value="4"/>
</dbReference>
<dbReference type="InterPro" id="IPR003107">
    <property type="entry name" value="HAT"/>
</dbReference>
<dbReference type="InterPro" id="IPR055433">
    <property type="entry name" value="HAT_Syf1-like_N"/>
</dbReference>
<dbReference type="InterPro" id="IPR056350">
    <property type="entry name" value="HAT_Syf1_central"/>
</dbReference>
<dbReference type="InterPro" id="IPR055430">
    <property type="entry name" value="HAT_Syf1_CNRKL1_C"/>
</dbReference>
<dbReference type="InterPro" id="IPR045075">
    <property type="entry name" value="Syf1-like"/>
</dbReference>
<dbReference type="InterPro" id="IPR011990">
    <property type="entry name" value="TPR-like_helical_dom_sf"/>
</dbReference>
<dbReference type="PANTHER" id="PTHR11246">
    <property type="entry name" value="PRE-MRNA SPLICING FACTOR"/>
    <property type="match status" value="1"/>
</dbReference>
<dbReference type="PANTHER" id="PTHR11246:SF5">
    <property type="entry name" value="PRE-MRNA-SPLICING FACTOR SYF1"/>
    <property type="match status" value="1"/>
</dbReference>
<dbReference type="Pfam" id="PF23231">
    <property type="entry name" value="HAT_Syf1_CNRKL1_C"/>
    <property type="match status" value="1"/>
</dbReference>
<dbReference type="Pfam" id="PF23233">
    <property type="entry name" value="HAT_Syf1_CNRKL1_N"/>
    <property type="match status" value="1"/>
</dbReference>
<dbReference type="Pfam" id="PF23220">
    <property type="entry name" value="HAT_Syf1_M"/>
    <property type="match status" value="1"/>
</dbReference>
<dbReference type="SMART" id="SM00386">
    <property type="entry name" value="HAT"/>
    <property type="match status" value="13"/>
</dbReference>
<dbReference type="SUPFAM" id="SSF48452">
    <property type="entry name" value="TPR-like"/>
    <property type="match status" value="3"/>
</dbReference>
<feature type="chain" id="PRO_0000205735" description="Pre-mRNA-splicing factor SYF1">
    <location>
        <begin position="1"/>
        <end position="1081"/>
    </location>
</feature>
<feature type="repeat" description="HAT 1">
    <location>
        <begin position="54"/>
        <end position="86"/>
    </location>
</feature>
<feature type="repeat" description="HAT 2">
    <location>
        <begin position="117"/>
        <end position="149"/>
    </location>
</feature>
<feature type="repeat" description="HAT 3">
    <location>
        <begin position="204"/>
        <end position="236"/>
    </location>
</feature>
<feature type="repeat" description="HAT 4">
    <location>
        <begin position="243"/>
        <end position="277"/>
    </location>
</feature>
<feature type="repeat" description="HAT 5">
    <location>
        <begin position="444"/>
        <end position="477"/>
    </location>
</feature>
<feature type="repeat" description="HAT 6">
    <location>
        <begin position="479"/>
        <end position="514"/>
    </location>
</feature>
<feature type="repeat" description="HAT 7">
    <location>
        <begin position="656"/>
        <end position="692"/>
    </location>
</feature>
<feature type="repeat" description="HAT 8">
    <location>
        <begin position="711"/>
        <end position="745"/>
    </location>
</feature>
<feature type="repeat" description="HAT 9">
    <location>
        <begin position="747"/>
        <end position="779"/>
    </location>
</feature>
<feature type="repeat" description="HAT 10">
    <location>
        <begin position="781"/>
        <end position="815"/>
    </location>
</feature>
<feature type="repeat" description="HAT 11">
    <location>
        <begin position="820"/>
        <end position="854"/>
    </location>
</feature>
<feature type="repeat" description="HAT 12">
    <location>
        <begin position="856"/>
        <end position="887"/>
    </location>
</feature>
<feature type="repeat" description="HAT 13">
    <location>
        <begin position="892"/>
        <end position="926"/>
    </location>
</feature>
<feature type="repeat" description="HAT 14">
    <location>
        <begin position="928"/>
        <end position="962"/>
    </location>
</feature>
<feature type="region of interest" description="Disordered" evidence="2">
    <location>
        <begin position="1"/>
        <end position="27"/>
    </location>
</feature>
<feature type="region of interest" description="Disordered" evidence="2">
    <location>
        <begin position="308"/>
        <end position="337"/>
    </location>
</feature>
<feature type="region of interest" description="Disordered" evidence="2">
    <location>
        <begin position="526"/>
        <end position="546"/>
    </location>
</feature>
<feature type="region of interest" description="Disordered" evidence="2">
    <location>
        <begin position="1001"/>
        <end position="1022"/>
    </location>
</feature>
<feature type="region of interest" description="Disordered" evidence="2">
    <location>
        <begin position="1047"/>
        <end position="1081"/>
    </location>
</feature>
<feature type="compositionally biased region" description="Acidic residues" evidence="2">
    <location>
        <begin position="311"/>
        <end position="326"/>
    </location>
</feature>
<feature type="compositionally biased region" description="Acidic residues" evidence="2">
    <location>
        <begin position="526"/>
        <end position="540"/>
    </location>
</feature>
<feature type="compositionally biased region" description="Low complexity" evidence="2">
    <location>
        <begin position="1001"/>
        <end position="1011"/>
    </location>
</feature>
<feature type="compositionally biased region" description="Low complexity" evidence="2">
    <location>
        <begin position="1047"/>
        <end position="1059"/>
    </location>
</feature>
<feature type="compositionally biased region" description="Acidic residues" evidence="2">
    <location>
        <begin position="1070"/>
        <end position="1081"/>
    </location>
</feature>
<name>SYF1_MYCMD</name>
<gene>
    <name type="primary">SYF1</name>
    <name type="ORF">UMAG_03842</name>
</gene>
<reference key="1">
    <citation type="journal article" date="2006" name="Nature">
        <title>Insights from the genome of the biotrophic fungal plant pathogen Ustilago maydis.</title>
        <authorList>
            <person name="Kaemper J."/>
            <person name="Kahmann R."/>
            <person name="Boelker M."/>
            <person name="Ma L.-J."/>
            <person name="Brefort T."/>
            <person name="Saville B.J."/>
            <person name="Banuett F."/>
            <person name="Kronstad J.W."/>
            <person name="Gold S.E."/>
            <person name="Mueller O."/>
            <person name="Perlin M.H."/>
            <person name="Woesten H.A.B."/>
            <person name="de Vries R."/>
            <person name="Ruiz-Herrera J."/>
            <person name="Reynaga-Pena C.G."/>
            <person name="Snetselaar K."/>
            <person name="McCann M."/>
            <person name="Perez-Martin J."/>
            <person name="Feldbruegge M."/>
            <person name="Basse C.W."/>
            <person name="Steinberg G."/>
            <person name="Ibeas J.I."/>
            <person name="Holloman W."/>
            <person name="Guzman P."/>
            <person name="Farman M.L."/>
            <person name="Stajich J.E."/>
            <person name="Sentandreu R."/>
            <person name="Gonzalez-Prieto J.M."/>
            <person name="Kennell J.C."/>
            <person name="Molina L."/>
            <person name="Schirawski J."/>
            <person name="Mendoza-Mendoza A."/>
            <person name="Greilinger D."/>
            <person name="Muench K."/>
            <person name="Roessel N."/>
            <person name="Scherer M."/>
            <person name="Vranes M."/>
            <person name="Ladendorf O."/>
            <person name="Vincon V."/>
            <person name="Fuchs U."/>
            <person name="Sandrock B."/>
            <person name="Meng S."/>
            <person name="Ho E.C.H."/>
            <person name="Cahill M.J."/>
            <person name="Boyce K.J."/>
            <person name="Klose J."/>
            <person name="Klosterman S.J."/>
            <person name="Deelstra H.J."/>
            <person name="Ortiz-Castellanos L."/>
            <person name="Li W."/>
            <person name="Sanchez-Alonso P."/>
            <person name="Schreier P.H."/>
            <person name="Haeuser-Hahn I."/>
            <person name="Vaupel M."/>
            <person name="Koopmann E."/>
            <person name="Friedrich G."/>
            <person name="Voss H."/>
            <person name="Schlueter T."/>
            <person name="Margolis J."/>
            <person name="Platt D."/>
            <person name="Swimmer C."/>
            <person name="Gnirke A."/>
            <person name="Chen F."/>
            <person name="Vysotskaia V."/>
            <person name="Mannhaupt G."/>
            <person name="Gueldener U."/>
            <person name="Muensterkoetter M."/>
            <person name="Haase D."/>
            <person name="Oesterheld M."/>
            <person name="Mewes H.-W."/>
            <person name="Mauceli E.W."/>
            <person name="DeCaprio D."/>
            <person name="Wade C.M."/>
            <person name="Butler J."/>
            <person name="Young S.K."/>
            <person name="Jaffe D.B."/>
            <person name="Calvo S.E."/>
            <person name="Nusbaum C."/>
            <person name="Galagan J.E."/>
            <person name="Birren B.W."/>
        </authorList>
    </citation>
    <scope>NUCLEOTIDE SEQUENCE [LARGE SCALE GENOMIC DNA]</scope>
    <source>
        <strain>DSM 14603 / FGSC 9021 / UM521</strain>
    </source>
</reference>
<reference key="2">
    <citation type="submission" date="2014-09" db="EMBL/GenBank/DDBJ databases">
        <authorList>
            <person name="Gueldener U."/>
            <person name="Muensterkoetter M."/>
            <person name="Walter M.C."/>
            <person name="Mannhaupt G."/>
            <person name="Kahmann R."/>
        </authorList>
    </citation>
    <scope>GENOME REANNOTATION</scope>
    <source>
        <strain>DSM 14603 / FGSC 9021 / UM521</strain>
    </source>
</reference>
<accession>Q4P7S1</accession>
<accession>A0A0D1DXC2</accession>
<sequence length="1081" mass="123103">MPPKMRSSQENVAVSSDATIQASSASSPLQDAMAAVTSLFPLTSPFPDPAKDDTLIPAADILLEQELLRNPDNFRSWSSYIDHIINTNVVKRPPPDVSLTTYQAALLGPLASSTQRTALRRLTSIYERALAQFPTRYSLWRDYLQNRSRFVLGDPKGGSDAKRKRDLQAAREKLDFGPTLIDSVEDEDFGSAYRGGLDGTVGWQEWKSLAALYERALMWLPTMPRLWLSYLSMFIHPQCPPILSFTHARRTFDRALRTLPGSLHLRVWKVYLKWAERRGGETCLRVWRRYLRVDPSLTERYVSILLAQREDQDEPEGEEEEAEDDAQSDRSRKQSGSKALEASKLLLGLARSAMDGTYVSPEGKSPFQLFVEWLELTEKYPEEIGLDPEEEKKYLQHSVALTSDNGMTNARRAPRHIQGKGTAAREIAKASSSKHPETDALDPTRLNVTAIIQKDGLDKFSDQSGRLWTGLATYWIKRGEFDVARDTFEAGIQTVKTVRDFTQIFDAYAETSENVIAFMMDELTEEGGDEEADAEDQEETREDKEAELDRRMQEFEELIERRPLLVNDVLLRRNPDDVQEWEKRVMLYGDNDEKIIETYREAIQKINPRKATPNFHQLFLNFAQFYEYGGSAGLAKRMAEGVEGQEEEEQAEQVEGDLESARKIFEKAITIPFRRVDDLAEIWCEWAEMELRHSNYDEAIRTMARSVAPPRNTKGIQYHDDTLPPQTRLFKSLKLWSFYVDLEESLGDVESTKRVYEKMLELKIASAQIIINYAAFLEDNKYFEESFKVFERGVELFSYPVAFEIWNVYLSKFVKRYGGAKLERARDLFEQALDKCPARFCKPLMLMYGQLEEEHGLVKRAMKIYERATRAVSTDDRFDMYVFYIAKAAATFGLAATRPIYERAIESLPDRQTAEMCLRFAALERKLGEIDRARVIYAHASQFCDPRTQTDFWKEWNQFEIETGSEDTFREMLRIKRSVQAQFNTDVSYIAASALASAQQNQAQRGAQGSSNGHVREDDVDASDPMARVEAASRSAGARQTAFVAASTAASGARSADTTIGDVAKNDEVVGGDDQDDQDLL</sequence>
<comment type="function">
    <text evidence="1">Involved in pre-mRNA splicing and cell cycle progression.</text>
</comment>
<comment type="subunit">
    <text evidence="1">Associated with the spliceosome.</text>
</comment>
<comment type="subcellular location">
    <subcellularLocation>
        <location evidence="1">Nucleus</location>
    </subcellularLocation>
</comment>
<comment type="similarity">
    <text evidence="3">Belongs to the crooked-neck family.</text>
</comment>